<reference key="1">
    <citation type="journal article" date="1986" name="Biochemistry">
        <title>Structure, evolution, and tissue-specific synthesis of human apolipoprotein AIV.</title>
        <authorList>
            <person name="Karathanasis S.K."/>
            <person name="Yunis I."/>
        </authorList>
    </citation>
    <scope>NUCLEOTIDE SEQUENCE [MRNA]</scope>
    <scope>VARIANTS ASN-147 AND LYS-279</scope>
</reference>
<reference key="2">
    <citation type="journal article" date="1986" name="Proc. Natl. Acad. Sci. U.S.A.">
        <title>Structure, evolution, and polymorphisms of the human apolipoprotein A4 gene (APOA4).</title>
        <authorList>
            <person name="Karathanasis S.K."/>
            <person name="Oettgen P."/>
            <person name="Haddad I.A."/>
            <person name="Antonarakis S.E."/>
        </authorList>
    </citation>
    <scope>NUCLEOTIDE SEQUENCE [GENOMIC DNA]</scope>
    <scope>VARIANTS ASN-147 AND LYS-279</scope>
</reference>
<reference key="3">
    <citation type="journal article" date="1987" name="J. Biol. Chem.">
        <title>Structure and expression of the human apolipoprotein A-IV gene.</title>
        <authorList>
            <person name="Elshourbagy N.A."/>
            <person name="Walker D.W."/>
            <person name="Paik Y.K."/>
            <person name="Boguski M.S."/>
            <person name="Freeman M."/>
            <person name="Gordon J.I."/>
            <person name="Taylor J.M."/>
        </authorList>
    </citation>
    <scope>NUCLEOTIDE SEQUENCE [GENOMIC DNA]</scope>
    <scope>POLYMORPHISM</scope>
    <scope>VARIANTS ASN-147 AND HIS-380</scope>
</reference>
<reference key="4">
    <citation type="journal article" date="1989" name="Biochim. Biophys. Acta">
        <title>The primary structure of human apolipoprotein A-IV.</title>
        <authorList>
            <person name="Yang C."/>
            <person name="Gu Z.W."/>
            <person name="Xiong W."/>
            <person name="Rosseneu M."/>
            <person name="Yang H.X."/>
            <person name="Lee B.M."/>
            <person name="Gotto A.M. Jr."/>
            <person name="Chan L."/>
        </authorList>
    </citation>
    <scope>NUCLEOTIDE SEQUENCE [MRNA]</scope>
    <scope>VARIANT ASN-147</scope>
    <source>
        <tissue>Intestine</tissue>
    </source>
</reference>
<reference key="5">
    <citation type="journal article" date="2004" name="Hum. Genet.">
        <title>The effects of scale: variation in the APOA1/C3/A4/A5 gene cluster.</title>
        <authorList>
            <person name="Fullerton S.M."/>
            <person name="Buchanan A.V."/>
            <person name="Sonpar V.A."/>
            <person name="Taylor S.L."/>
            <person name="Smith J.D."/>
            <person name="Carlson C.S."/>
            <person name="Salomaa V."/>
            <person name="Stengaard J.H."/>
            <person name="Boerwinkle E."/>
            <person name="Clark A.G."/>
            <person name="Nickerson D.A."/>
            <person name="Weiss K.M."/>
        </authorList>
    </citation>
    <scope>NUCLEOTIDE SEQUENCE [GENOMIC DNA]</scope>
    <scope>VARIANTS MET-13; HIS-77; ASN-147; SER-161; SER-367 AND HIS-380</scope>
</reference>
<reference key="6">
    <citation type="journal article" date="2006" name="Nature">
        <title>Human chromosome 11 DNA sequence and analysis including novel gene identification.</title>
        <authorList>
            <person name="Taylor T.D."/>
            <person name="Noguchi H."/>
            <person name="Totoki Y."/>
            <person name="Toyoda A."/>
            <person name="Kuroki Y."/>
            <person name="Dewar K."/>
            <person name="Lloyd C."/>
            <person name="Itoh T."/>
            <person name="Takeda T."/>
            <person name="Kim D.-W."/>
            <person name="She X."/>
            <person name="Barlow K.F."/>
            <person name="Bloom T."/>
            <person name="Bruford E."/>
            <person name="Chang J.L."/>
            <person name="Cuomo C.A."/>
            <person name="Eichler E."/>
            <person name="FitzGerald M.G."/>
            <person name="Jaffe D.B."/>
            <person name="LaButti K."/>
            <person name="Nicol R."/>
            <person name="Park H.-S."/>
            <person name="Seaman C."/>
            <person name="Sougnez C."/>
            <person name="Yang X."/>
            <person name="Zimmer A.R."/>
            <person name="Zody M.C."/>
            <person name="Birren B.W."/>
            <person name="Nusbaum C."/>
            <person name="Fujiyama A."/>
            <person name="Hattori M."/>
            <person name="Rogers J."/>
            <person name="Lander E.S."/>
            <person name="Sakaki Y."/>
        </authorList>
    </citation>
    <scope>NUCLEOTIDE SEQUENCE [LARGE SCALE GENOMIC DNA]</scope>
    <scope>VARIANT ASN-147</scope>
</reference>
<reference key="7">
    <citation type="journal article" date="2004" name="Genome Res.">
        <title>The status, quality, and expansion of the NIH full-length cDNA project: the Mammalian Gene Collection (MGC).</title>
        <authorList>
            <consortium name="The MGC Project Team"/>
        </authorList>
    </citation>
    <scope>NUCLEOTIDE SEQUENCE [LARGE SCALE MRNA]</scope>
    <scope>VARIANT ASN-147</scope>
    <source>
        <tissue>Brain</tissue>
        <tissue>Colon</tissue>
    </source>
</reference>
<reference key="8">
    <citation type="journal article" date="1986" name="J. Biol. Chem.">
        <title>The nucleotide and derived amino acid sequence of human apolipoprotein A-IV mRNA and the close linkage of its gene to the genes of apolipoproteins A-I and C-III.</title>
        <authorList>
            <person name="Elshourbagy N.A."/>
            <person name="Walker D.W."/>
            <person name="Boguski M.S."/>
            <person name="Gordon J.I."/>
            <person name="Taylor J.M."/>
        </authorList>
    </citation>
    <scope>NUCLEOTIDE SEQUENCE [MRNA] OF 21-396</scope>
    <scope>VARIANTS ASN-147 AND HIS-380</scope>
</reference>
<reference key="9">
    <citation type="journal article" date="1984" name="J. Biol. Chem.">
        <title>Biosynthesis of human preapolipoprotein A-IV.</title>
        <authorList>
            <person name="Gordon J.I."/>
            <person name="Bisgaier C.L."/>
            <person name="Sims H.F."/>
            <person name="Sachdev O.P."/>
            <person name="Glickman R.M."/>
            <person name="Strauss A.W."/>
        </authorList>
    </citation>
    <scope>SIGNAL SEQUENCE CLEAVAGE SITE</scope>
</reference>
<reference key="10">
    <citation type="journal article" date="1991" name="Curr. Opin. Lipidol.">
        <title>Genetic polymorphism of apolipoprotein A-IV.</title>
        <authorList>
            <person name="Lohse P."/>
            <person name="Brewer H.B. Jr."/>
        </authorList>
    </citation>
    <scope>REVIEW ON POLYMORPHISM</scope>
</reference>
<reference key="11">
    <citation type="journal article" date="1990" name="J. Biol. Chem.">
        <title>Genetic polymorphism of human plasma apolipoprotein A-IV is due to nucleotide substitutions in the apolipoprotein A-IV gene.</title>
        <authorList>
            <person name="Lohse P."/>
            <person name="Kindt M.R."/>
            <person name="Rader D.J."/>
            <person name="Brewer H.B. Jr."/>
        </authorList>
    </citation>
    <scope>POLYMORPHISM</scope>
    <scope>ALLELES APOA-IV*1 AND APOA-IV*2</scope>
    <scope>VARIANT HIS-380</scope>
</reference>
<reference key="12">
    <citation type="journal article" date="1990" name="J. Biol. Chem.">
        <title>Human plasma apolipoproteins A-IV-0 and A-IV-3. Molecular basis for two rare variants of apolipoprotein A-IV-1.</title>
        <authorList>
            <person name="Lohse P."/>
            <person name="Kindt M.R."/>
            <person name="Rader D.J."/>
            <person name="Brewer H.B. Jr."/>
        </authorList>
    </citation>
    <scope>POLYMORPHISM</scope>
    <scope>ALLELES A-IV*0 AND A-IV*3</scope>
    <scope>VARIANTS LYS-250 AND GLU-GLN-GLN-GLN-381 INS</scope>
</reference>
<reference key="13">
    <citation type="journal article" date="2011" name="BMC Syst. Biol.">
        <title>Initial characterization of the human central proteome.</title>
        <authorList>
            <person name="Burkard T.R."/>
            <person name="Planyavsky M."/>
            <person name="Kaupe I."/>
            <person name="Breitwieser F.P."/>
            <person name="Buerckstuemmer T."/>
            <person name="Bennett K.L."/>
            <person name="Superti-Furga G."/>
            <person name="Colinge J."/>
        </authorList>
    </citation>
    <scope>IDENTIFICATION BY MASS SPECTROMETRY [LARGE SCALE ANALYSIS]</scope>
</reference>
<reference key="14">
    <citation type="journal article" date="2024" name="Kidney Int.">
        <title>Autosomal dominant ApoA4 mutations present as tubulointerstitial kidney disease with medullary amyloidosis.</title>
        <authorList>
            <person name="Kmochova T."/>
            <person name="Kidd K.O."/>
            <person name="Orr A."/>
            <person name="Hnizda A."/>
            <person name="Hartmannova H."/>
            <person name="Hodanova K."/>
            <person name="Vyletal P."/>
            <person name="Nausova K."/>
            <person name="Brinsa V."/>
            <person name="Treslova H."/>
            <person name="Sovova J."/>
            <person name="Baresova V."/>
            <person name="Svojsova K."/>
            <person name="Vrbacka A."/>
            <person name="Stranecky V."/>
            <person name="Robins V.C."/>
            <person name="Taylor A."/>
            <person name="Martin L."/>
            <person name="Rivas-Chavez A."/>
            <person name="Payne R."/>
            <person name="Bleyer H.A."/>
            <person name="Williams A."/>
            <person name="Rennke H.G."/>
            <person name="Weins A."/>
            <person name="Short P.J."/>
            <person name="Agrawal V."/>
            <person name="Storsley L.J."/>
            <person name="Waikar S.S."/>
            <person name="McPhail E.D."/>
            <person name="Dasari S."/>
            <person name="Leung N."/>
            <person name="Hewlett T."/>
            <person name="Yorke J."/>
            <person name="Gaston D."/>
            <person name="Geldenhuys L."/>
            <person name="Samuels M."/>
            <person name="Levine A.P."/>
            <person name="West M."/>
            <person name="Hulkova H."/>
            <person name="Pompach P."/>
            <person name="Novak P."/>
            <person name="Weinberg R.B."/>
            <person name="Bedard K."/>
            <person name="Zivna M."/>
            <person name="Sikora J."/>
            <person name="Bleyer A.J. Sr."/>
            <person name="Kmoch S."/>
        </authorList>
    </citation>
    <scope>INVOLVEMENT IN ADTKD6</scope>
    <scope>VARIANTS ADTKD6 ASN-33 AND VAL-66</scope>
</reference>
<reference key="15">
    <citation type="journal article" date="2012" name="Structure">
        <title>The structure of dimeric apolipoprotein A-IV and its mechanism of self-association.</title>
        <authorList>
            <person name="Deng X."/>
            <person name="Morris J."/>
            <person name="Dressmen J."/>
            <person name="Tubb M.R."/>
            <person name="Tso P."/>
            <person name="Jerome W.G."/>
            <person name="Davidson W.S."/>
            <person name="Thompson T.B."/>
        </authorList>
    </citation>
    <scope>X-RAY CRYSTALLOGRAPHY (2.4 ANGSTROMS) OF 84-355</scope>
    <scope>SUBUNIT</scope>
</reference>
<reference key="16">
    <citation type="journal article" date="1991" name="Arterioscler. Thromb.">
        <title>The mutation causing the common apolipoprotein A-IV polymorphism is a glutamine to histidine substitution of amino acid 360.</title>
        <authorList>
            <person name="Tenkanen H."/>
            <person name="Lukka M."/>
            <person name="Jauhiainen M."/>
            <person name="Metso J."/>
            <person name="Baumann M."/>
            <person name="Peltonen L."/>
            <person name="Ehnholm C."/>
        </authorList>
    </citation>
    <scope>VARIANT HIS-380</scope>
</reference>
<reference key="17">
    <citation type="journal article" date="1991" name="J. Biol. Chem.">
        <title>Three genetic variants of human plasma apolipoprotein A-IV: apoA-IV-1(Thr-347--&gt;Ser), apoA-IV-0(Lys-167--&gt;Glu,Gln-360--&gt;His), and apoA-IV-3(Glu-165--&gt;Lys).</title>
        <authorList>
            <person name="Lohse P."/>
            <person name="Kindt M.R."/>
            <person name="Rader D.J."/>
            <person name="Brewer H.B. Jr."/>
        </authorList>
    </citation>
    <scope>POLYMORPHISM</scope>
    <scope>ALLELES A-IV*0; A-IV*1; A-IV*2 AND A-IV*3</scope>
    <scope>VARIANTS LYS-185; GLU-187; SER-367 AND HIS-380</scope>
</reference>
<reference key="18">
    <citation type="journal article" date="1991" name="J. Biol. Chem.">
        <authorList>
            <person name="Lohse P."/>
            <person name="Kindt M.R."/>
            <person name="Rader D.J."/>
            <person name="Brewer H.B. Jr."/>
        </authorList>
    </citation>
    <scope>ERRATUM OF PUBMED:1677358</scope>
</reference>
<reference key="19">
    <citation type="journal article" date="1992" name="Am. J. Hum. Genet.">
        <title>Nonsynonymous polymorphic sites in the apolipoprotein (apo) A-IV gene are associated with changes in the concentration of apo B- and apo A-I-containing lipoproteins in a normal population.</title>
        <authorList>
            <person name="von Eckardstein A."/>
            <person name="Funke H."/>
            <person name="Schulte M."/>
            <person name="Erren M."/>
            <person name="Schulte H."/>
            <person name="Assmann G."/>
        </authorList>
    </citation>
    <scope>VARIANT MET-13</scope>
</reference>
<reference key="20">
    <citation type="journal article" date="1992" name="Biochim. Biophys. Acta">
        <title>A novel polymorphism of apolipoprotein A-IV is the result of an asparagine to serine substitution at residue 127.</title>
        <authorList>
            <person name="Tenkanen H."/>
            <person name="Koskinen P."/>
            <person name="Metso J."/>
            <person name="Baumann M."/>
            <person name="Lukka M."/>
            <person name="Kauppinen-Makelin R."/>
            <person name="Kontula K."/>
            <person name="Taskinen M.R."/>
            <person name="Manttari M."/>
            <person name="Manninen V."/>
            <person name="Ehnholm C."/>
        </authorList>
    </citation>
    <scope>VARIANT ASN-147</scope>
</reference>
<reference key="21">
    <citation type="journal article" date="1992" name="Genet. Epidemiol.">
        <title>Molecular basis of a unique African variant (A-IV 5) of human apolipoprotein A-IV and its significance in lipid metabolism.</title>
        <authorList>
            <person name="Kamboh M.I."/>
            <person name="Williams E.R."/>
            <person name="Law J.C."/>
            <person name="Aston C.E."/>
            <person name="Bunker C.H."/>
            <person name="Ferrell R.E."/>
            <person name="Pollitzer W.S."/>
        </authorList>
    </citation>
    <scope>POLYMORPHISM</scope>
    <scope>ALLELE A-IV*5</scope>
    <scope>VARIANT GLU-GLN-GLN-GLN-381 INS</scope>
</reference>
<reference key="22">
    <citation type="journal article" date="1995" name="Hum. Mutat.">
        <title>Apolipoprotein A-IV polymorphism in the Hungarian population: gene frequencies, effect on lipid levels, and sequence of two new variants.</title>
        <authorList>
            <person name="Menzel H.J."/>
            <person name="Dieplinger H."/>
            <person name="Sandholzer C."/>
            <person name="Karadi I."/>
            <person name="Utermann G."/>
            <person name="Csaszar A."/>
        </authorList>
    </citation>
    <scope>VARIANT BUDAPEST-2 LYS-44</scope>
    <scope>VARIANTS BUDAPEST-1 CYS-305 AND SER-367</scope>
</reference>
<reference key="23">
    <citation type="journal article" date="1996" name="Hum. Mutat.">
        <title>Two novel apolipoprotein A-IV variants in individuals with familial combined hyperlipidemia and diminished levels of lipoprotein lipase activity.</title>
        <authorList>
            <person name="Deeb S.S."/>
            <person name="Nevin D.N."/>
            <person name="Iwasaki L."/>
            <person name="Brunzell J.D."/>
        </authorList>
    </citation>
    <scope>VARIANT SEATTLE-3 SER-161</scope>
    <scope>VARIANT SEATTLE-1 LEU-178</scope>
    <scope>VARIANT SEATTLE-2 GLN-264</scope>
</reference>
<reference key="24">
    <citation type="journal article" date="1999" name="Nat. Genet.">
        <title>Patterns of single-nucleotide polymorphisms in candidate genes for blood-pressure homeostasis.</title>
        <authorList>
            <person name="Halushka M.K."/>
            <person name="Fan J.-B."/>
            <person name="Bentley K."/>
            <person name="Hsie L."/>
            <person name="Shen N."/>
            <person name="Weder A."/>
            <person name="Cooper R."/>
            <person name="Lipshutz R."/>
            <person name="Chakravarti A."/>
        </authorList>
    </citation>
    <scope>VARIANT HIS-380</scope>
</reference>
<gene>
    <name evidence="25 26 27 28" type="primary">APOA4</name>
</gene>
<accession>P06727</accession>
<accession>A8MSL6</accession>
<accession>Q14CW8</accession>
<accession>Q6Q787</accession>
<evidence type="ECO:0000256" key="1">
    <source>
        <dbReference type="SAM" id="MobiDB-lite"/>
    </source>
</evidence>
<evidence type="ECO:0000269" key="2">
    <source>
    </source>
</evidence>
<evidence type="ECO:0000269" key="3">
    <source>
    </source>
</evidence>
<evidence type="ECO:0000269" key="4">
    <source>
    </source>
</evidence>
<evidence type="ECO:0000269" key="5">
    <source>
    </source>
</evidence>
<evidence type="ECO:0000269" key="6">
    <source>
    </source>
</evidence>
<evidence type="ECO:0000269" key="7">
    <source>
    </source>
</evidence>
<evidence type="ECO:0000269" key="8">
    <source>
    </source>
</evidence>
<evidence type="ECO:0000269" key="9">
    <source>
    </source>
</evidence>
<evidence type="ECO:0000269" key="10">
    <source>
    </source>
</evidence>
<evidence type="ECO:0000269" key="11">
    <source>
    </source>
</evidence>
<evidence type="ECO:0000269" key="12">
    <source>
    </source>
</evidence>
<evidence type="ECO:0000269" key="13">
    <source>
    </source>
</evidence>
<evidence type="ECO:0000269" key="14">
    <source>
    </source>
</evidence>
<evidence type="ECO:0000269" key="15">
    <source>
    </source>
</evidence>
<evidence type="ECO:0000269" key="16">
    <source>
    </source>
</evidence>
<evidence type="ECO:0000269" key="17">
    <source>
    </source>
</evidence>
<evidence type="ECO:0000269" key="18">
    <source>
    </source>
</evidence>
<evidence type="ECO:0000269" key="19">
    <source>
    </source>
</evidence>
<evidence type="ECO:0000269" key="20">
    <source>
    </source>
</evidence>
<evidence type="ECO:0000269" key="21">
    <source>
    </source>
</evidence>
<evidence type="ECO:0000269" key="22">
    <source>
    </source>
</evidence>
<evidence type="ECO:0000269" key="23">
    <source ref="10"/>
</evidence>
<evidence type="ECO:0000303" key="24">
    <source>
    </source>
</evidence>
<evidence type="ECO:0000303" key="25">
    <source>
    </source>
</evidence>
<evidence type="ECO:0000303" key="26">
    <source>
    </source>
</evidence>
<evidence type="ECO:0000303" key="27">
    <source>
    </source>
</evidence>
<evidence type="ECO:0000303" key="28">
    <source>
    </source>
</evidence>
<evidence type="ECO:0000305" key="29"/>
<evidence type="ECO:0007829" key="30">
    <source>
        <dbReference type="PDB" id="3S84"/>
    </source>
</evidence>
<keyword id="KW-0002">3D-structure</keyword>
<keyword id="KW-1008">Amyloidosis</keyword>
<keyword id="KW-0162">Chylomicron</keyword>
<keyword id="KW-0225">Disease variant</keyword>
<keyword id="KW-0345">HDL</keyword>
<keyword id="KW-0445">Lipid transport</keyword>
<keyword id="KW-0597">Phosphoprotein</keyword>
<keyword id="KW-1267">Proteomics identification</keyword>
<keyword id="KW-1185">Reference proteome</keyword>
<keyword id="KW-0677">Repeat</keyword>
<keyword id="KW-0964">Secreted</keyword>
<keyword id="KW-0732">Signal</keyword>
<keyword id="KW-0813">Transport</keyword>
<proteinExistence type="evidence at protein level"/>
<comment type="function">
    <text>May have a role in chylomicrons and VLDL secretion and catabolism. Required for efficient activation of lipoprotein lipase by ApoC-II; potent activator of LCAT. Apoa-IV is a major component of HDL and chylomicrons.</text>
</comment>
<comment type="subunit">
    <text evidence="12">Homodimer.</text>
</comment>
<comment type="interaction">
    <interactant intactId="EBI-1222447">
        <id>P06727</id>
    </interactant>
    <interactant intactId="EBI-11522760">
        <id>Q6RW13-2</id>
        <label>AGTRAP</label>
    </interactant>
    <organismsDiffer>false</organismsDiffer>
    <experiments>3</experiments>
</comment>
<comment type="interaction">
    <interactant intactId="EBI-1222447">
        <id>P06727</id>
    </interactant>
    <interactant intactId="EBI-1222447">
        <id>P06727</id>
        <label>APOA4</label>
    </interactant>
    <organismsDiffer>false</organismsDiffer>
    <experiments>10</experiments>
</comment>
<comment type="interaction">
    <interactant intactId="EBI-1222447">
        <id>P06727</id>
    </interactant>
    <interactant intactId="EBI-718729">
        <id>P55212</id>
        <label>CASP6</label>
    </interactant>
    <organismsDiffer>false</organismsDiffer>
    <experiments>3</experiments>
</comment>
<comment type="interaction">
    <interactant intactId="EBI-1222447">
        <id>P06727</id>
    </interactant>
    <interactant intactId="EBI-17278014">
        <id>Q8IZR5-2</id>
        <label>CMTM4</label>
    </interactant>
    <organismsDiffer>false</organismsDiffer>
    <experiments>3</experiments>
</comment>
<comment type="interaction">
    <interactant intactId="EBI-1222447">
        <id>P06727</id>
    </interactant>
    <interactant intactId="EBI-11522780">
        <id>Q96DZ9-2</id>
        <label>CMTM5</label>
    </interactant>
    <organismsDiffer>false</organismsDiffer>
    <experiments>3</experiments>
</comment>
<comment type="interaction">
    <interactant intactId="EBI-1222447">
        <id>P06727</id>
    </interactant>
    <interactant intactId="EBI-1045155">
        <id>P43360</id>
        <label>MAGEA6</label>
    </interactant>
    <organismsDiffer>false</organismsDiffer>
    <experiments>3</experiments>
</comment>
<comment type="interaction">
    <interactant intactId="EBI-1222447">
        <id>P06727</id>
    </interactant>
    <interactant intactId="EBI-2811738">
        <id>P20393</id>
        <label>NR1D1</label>
    </interactant>
    <organismsDiffer>false</organismsDiffer>
    <experiments>3</experiments>
</comment>
<comment type="interaction">
    <interactant intactId="EBI-1222447">
        <id>P06727</id>
    </interactant>
    <interactant intactId="EBI-2623095">
        <id>Q9Y371</id>
        <label>SH3GLB1</label>
    </interactant>
    <organismsDiffer>false</organismsDiffer>
    <experiments>3</experiments>
</comment>
<comment type="subcellular location">
    <subcellularLocation>
        <location>Secreted</location>
    </subcellularLocation>
</comment>
<comment type="tissue specificity">
    <text>Synthesized primarily in the intestine and secreted in plasma.</text>
</comment>
<comment type="domain">
    <text>Nine of the thirteen 22-amino acid tandem repeats (each 22-mer is actually a tandem array of two, A and B, related 11-mers) occurring in this sequence are predicted to be highly alpha-helical, and many of these helices are amphipathic. They may therefore serve as lipid-binding domains with lecithin:cholesterol acyltransferase (LCAT) activating abilities.</text>
</comment>
<comment type="PTM">
    <text>Phosphorylation sites are present in the extracellular medium.</text>
</comment>
<comment type="polymorphism">
    <text evidence="4 8 10 13 15 23">Eight alleles have been characterized (APOA-IV*0 to APOA-IV*7). APOA-IV*1 is the major allele (90%), APOA-IV*2 is also common (8%), the others are rare alleles.</text>
</comment>
<comment type="disease" evidence="19">
    <disease id="DI-07007">
        <name>Tubulointerstitial kidney disease, autosomal dominant 6</name>
        <acronym>ADTKD6</acronym>
        <description>A form of autosomal dominant tubulointerstitial kidney disease, a genetically heterogeneous disorder characterized by slowly progressive loss of kidney function, bland urinary sediment, hyperuricemia, absent or mildly increased albuminuria, lack of severe hypertension during the early stages, and normal or small kidneys on ultrasound. Renal histology shows variable abnormalities including interstitial fibrosis with tubular atrophy, microcystic dilatation of the tubules, thickening of tubular basement membranes, medullary cysts, and secondary glomerulosclerotic or glomerulocystic changes with abnormal glomerular tufting. There is significant variability, as well as incomplete penetrance. ADTKD6 is characterized by the onset of slowly progressive renal failure in mid-to-late adulthood, and the presence of APOA4-positive amyloid deposits in the renal medulla without systemic amyloid deposition in other organs.</description>
        <dbReference type="MIM" id="621106"/>
    </disease>
    <text>The disease is caused by variants affecting the gene represented in this entry.</text>
</comment>
<comment type="similarity">
    <text evidence="29">Belongs to the apolipoprotein A1/A4/E family.</text>
</comment>
<organism>
    <name type="scientific">Homo sapiens</name>
    <name type="common">Human</name>
    <dbReference type="NCBI Taxonomy" id="9606"/>
    <lineage>
        <taxon>Eukaryota</taxon>
        <taxon>Metazoa</taxon>
        <taxon>Chordata</taxon>
        <taxon>Craniata</taxon>
        <taxon>Vertebrata</taxon>
        <taxon>Euteleostomi</taxon>
        <taxon>Mammalia</taxon>
        <taxon>Eutheria</taxon>
        <taxon>Euarchontoglires</taxon>
        <taxon>Primates</taxon>
        <taxon>Haplorrhini</taxon>
        <taxon>Catarrhini</taxon>
        <taxon>Hominidae</taxon>
        <taxon>Homo</taxon>
    </lineage>
</organism>
<sequence>MFLKAVVLTLALVAVAGARAEVSADQVATVMWDYFSQLSNNAKEAVEHLQKSELTQQLNALFQDKLGEVNTYAGDLQKKLVPFATELHERLAKDSEKLKEEIGKELEELRARLLPHANEVSQKIGDNLRELQQRLEPYADQLRTQVSTQAEQLRRQLTPYAQRMERVLRENADSLQASLRPHADELKAKIDQNVEELKGRLTPYADEFKVKIDQTVEELRRSLAPYAQDTQEKLNHQLEGLTFQMKKNAEELKARISASAEELRQRLAPLAEDVRGNLRGNTEGLQKSLAELGGHLDQQVEEFRRRVEPYGENFNKALVQQMEQLRQKLGPHAGDVEGHLSFLEKDLRDKVNSFFSTFKEKESQDKTLSLPELEQQQEQQQEQQQEQVQMLAPLES</sequence>
<protein>
    <recommendedName>
        <fullName evidence="24 25 26">Apolipoprotein A-IV</fullName>
        <shortName>Apo-AIV</shortName>
        <shortName>ApoA-IV</shortName>
    </recommendedName>
    <alternativeName>
        <fullName evidence="25 27 28">Apolipoprotein A4</fullName>
    </alternativeName>
</protein>
<feature type="signal peptide" evidence="20">
    <location>
        <begin position="1"/>
        <end position="20"/>
    </location>
</feature>
<feature type="chain" id="PRO_0000001975" description="Apolipoprotein A-IV">
    <location>
        <begin position="21"/>
        <end position="396"/>
    </location>
</feature>
<feature type="repeat" description="1">
    <location>
        <begin position="33"/>
        <end position="54"/>
    </location>
</feature>
<feature type="repeat" description="2">
    <location>
        <begin position="60"/>
        <end position="81"/>
    </location>
</feature>
<feature type="repeat" description="3">
    <location>
        <begin position="82"/>
        <end position="103"/>
    </location>
</feature>
<feature type="repeat" description="4">
    <location>
        <begin position="115"/>
        <end position="136"/>
    </location>
</feature>
<feature type="repeat" description="5">
    <location>
        <begin position="137"/>
        <end position="158"/>
    </location>
</feature>
<feature type="repeat" description="6">
    <location>
        <begin position="159"/>
        <end position="180"/>
    </location>
</feature>
<feature type="repeat" description="7">
    <location>
        <begin position="181"/>
        <end position="202"/>
    </location>
</feature>
<feature type="repeat" description="8">
    <location>
        <begin position="203"/>
        <end position="224"/>
    </location>
</feature>
<feature type="repeat" description="9">
    <location>
        <begin position="225"/>
        <end position="246"/>
    </location>
</feature>
<feature type="repeat" description="10">
    <location>
        <begin position="247"/>
        <end position="268"/>
    </location>
</feature>
<feature type="repeat" description="11">
    <location>
        <begin position="269"/>
        <end position="286"/>
    </location>
</feature>
<feature type="repeat" description="12">
    <location>
        <begin position="287"/>
        <end position="308"/>
    </location>
</feature>
<feature type="repeat" description="13">
    <location>
        <begin position="309"/>
        <end position="330"/>
    </location>
</feature>
<feature type="region of interest" description="13 X 22 AA approximate tandem repeats">
    <location>
        <begin position="33"/>
        <end position="330"/>
    </location>
</feature>
<feature type="region of interest" description="Disordered" evidence="1">
    <location>
        <begin position="361"/>
        <end position="396"/>
    </location>
</feature>
<feature type="compositionally biased region" description="Low complexity" evidence="1">
    <location>
        <begin position="374"/>
        <end position="389"/>
    </location>
</feature>
<feature type="sequence variant" id="VAR_000626" description="In allele APOA-IV*1D; dbSNP:rs12721041." evidence="3 5">
    <original>V</original>
    <variation>M</variation>
    <location>
        <position position="13"/>
    </location>
</feature>
<feature type="sequence variant" id="VAR_090481" description="In ADTKD6; likely pathogenic." evidence="19">
    <original>D</original>
    <variation>N</variation>
    <location>
        <position position="33"/>
    </location>
</feature>
<feature type="sequence variant" id="VAR_000627" description="In Budapest-2." evidence="21">
    <original>E</original>
    <variation>K</variation>
    <location>
        <position position="44"/>
    </location>
</feature>
<feature type="sequence variant" id="VAR_090482" description="In ADTKD6; likely pathogenic." evidence="19">
    <original>L</original>
    <variation>V</variation>
    <location>
        <position position="66"/>
    </location>
</feature>
<feature type="sequence variant" id="VAR_014610" description="In dbSNP:rs5102.">
    <original>G</original>
    <variation>S</variation>
    <location>
        <position position="74"/>
    </location>
</feature>
<feature type="sequence variant" id="VAR_025444" description="In dbSNP:rs12721042." evidence="5">
    <original>Q</original>
    <variation>H</variation>
    <location>
        <position position="77"/>
    </location>
</feature>
<feature type="sequence variant" id="VAR_000628" description="In dbSNP:rs5104." evidence="5 6 7 9 14 15 16 17 18">
    <original>S</original>
    <variation>N</variation>
    <location>
        <position position="147"/>
    </location>
</feature>
<feature type="sequence variant" id="VAR_000629" description="In Seattle-3; dbSNP:rs12721043." evidence="5 22">
    <original>A</original>
    <variation>S</variation>
    <location>
        <position position="161"/>
    </location>
</feature>
<feature type="sequence variant" id="VAR_000630" description="In Seattle-1; may contribute to the development of familial combined hyperlipidemia; dbSNP:rs1181852696." evidence="22">
    <original>S</original>
    <variation>L</variation>
    <location>
        <position position="178"/>
    </location>
</feature>
<feature type="sequence variant" id="VAR_000631" description="In allele APOA-IV*3; dbSNP:rs201861136." evidence="8">
    <original>E</original>
    <variation>K</variation>
    <location>
        <position position="185"/>
    </location>
</feature>
<feature type="sequence variant" id="VAR_000632" description="In allele APOA-IV*0A; associated with H-380; dbSNP:rs773492545." evidence="8">
    <original>K</original>
    <variation>E</variation>
    <location>
        <position position="187"/>
    </location>
</feature>
<feature type="sequence variant" id="VAR_000633" description="In allele APOA-IV*3A; dbSNP:rs121909576." evidence="10">
    <original>E</original>
    <variation>K</variation>
    <location>
        <position position="250"/>
    </location>
</feature>
<feature type="sequence variant" id="VAR_000634" description="In Seattle-2; may contribute to the development of familial combined hyperlipidemia; dbSNP:rs2238008." evidence="22">
    <original>R</original>
    <variation>Q</variation>
    <location>
        <position position="264"/>
    </location>
</feature>
<feature type="sequence variant" id="VAR_025443" description="In dbSNP:rs1042372." evidence="17 18">
    <original>R</original>
    <variation>K</variation>
    <location>
        <position position="279"/>
    </location>
</feature>
<feature type="sequence variant" id="VAR_000635" description="In allele Budapest-1; dbSNP:rs150264487." evidence="21">
    <original>R</original>
    <variation>C</variation>
    <location>
        <position position="305"/>
    </location>
</feature>
<feature type="sequence variant" id="VAR_014611" description="In dbSNP:rs5108.">
    <original>V</original>
    <variation>L</variation>
    <location>
        <position position="307"/>
    </location>
</feature>
<feature type="sequence variant" id="VAR_000636" description="In allele APOA-IV*1A and allele Budapest-1; dbSNP:rs675." evidence="5 8 21">
    <original>T</original>
    <variation>S</variation>
    <location>
        <position position="367"/>
    </location>
</feature>
<feature type="sequence variant" id="VAR_000637" description="In allele APOA-IV*2 and allele APOA-IV*0A; associated with E-187 in allele APOA-IV*0A; dbSNP:rs5110." evidence="2 5 8 11 13 15 16">
    <original>Q</original>
    <variation>H</variation>
    <location>
        <position position="380"/>
    </location>
</feature>
<feature type="sequence variant" id="VAR_000638" description="In allele APOA-IV*0 and allele APOA-IV*5; allele APOA-IV*5 is further defined by a silent nucleotide substitution." evidence="4">
    <original>Q</original>
    <variation>QEQQQ</variation>
    <location>
        <position position="381"/>
    </location>
</feature>
<feature type="sequence conflict" description="In Ref. 1; AAA51744 and 2; AAA51745." evidence="29" ref="1 2">
    <original>TPY</original>
    <variation>DPL</variation>
    <location>
        <begin position="158"/>
        <end position="160"/>
    </location>
</feature>
<feature type="sequence conflict" description="In Ref. 3; AAA96731 and 8; AAA51748." evidence="29" ref="3 8">
    <original>Q</original>
    <variation>T</variation>
    <location>
        <position position="327"/>
    </location>
</feature>
<feature type="helix" evidence="30">
    <location>
        <begin position="97"/>
        <end position="113"/>
    </location>
</feature>
<feature type="helix" evidence="30">
    <location>
        <begin position="114"/>
        <end position="116"/>
    </location>
</feature>
<feature type="helix" evidence="30">
    <location>
        <begin position="117"/>
        <end position="223"/>
    </location>
</feature>
<feature type="helix" evidence="30">
    <location>
        <begin position="224"/>
        <end position="226"/>
    </location>
</feature>
<feature type="helix" evidence="30">
    <location>
        <begin position="231"/>
        <end position="276"/>
    </location>
</feature>
<feature type="strand" evidence="30">
    <location>
        <begin position="278"/>
        <end position="280"/>
    </location>
</feature>
<feature type="helix" evidence="30">
    <location>
        <begin position="282"/>
        <end position="307"/>
    </location>
</feature>
<feature type="helix" evidence="30">
    <location>
        <begin position="310"/>
        <end position="329"/>
    </location>
</feature>
<dbReference type="EMBL" id="M13654">
    <property type="protein sequence ID" value="AAA51744.1"/>
    <property type="molecule type" value="mRNA"/>
</dbReference>
<dbReference type="EMBL" id="M14642">
    <property type="protein sequence ID" value="AAA51745.1"/>
    <property type="molecule type" value="Genomic_DNA"/>
</dbReference>
<dbReference type="EMBL" id="J02758">
    <property type="protein sequence ID" value="AAA96731.1"/>
    <property type="molecule type" value="Genomic_DNA"/>
</dbReference>
<dbReference type="EMBL" id="X13629">
    <property type="protein sequence ID" value="CAA31955.1"/>
    <property type="molecule type" value="mRNA"/>
</dbReference>
<dbReference type="EMBL" id="AY422950">
    <property type="protein sequence ID" value="AAQ91809.1"/>
    <property type="molecule type" value="Genomic_DNA"/>
</dbReference>
<dbReference type="EMBL" id="AY555191">
    <property type="protein sequence ID" value="AAS68228.1"/>
    <property type="molecule type" value="Genomic_DNA"/>
</dbReference>
<dbReference type="EMBL" id="AP006216">
    <property type="status" value="NOT_ANNOTATED_CDS"/>
    <property type="molecule type" value="Genomic_DNA"/>
</dbReference>
<dbReference type="EMBL" id="BC074764">
    <property type="protein sequence ID" value="AAH74764.1"/>
    <property type="molecule type" value="mRNA"/>
</dbReference>
<dbReference type="EMBL" id="BC113594">
    <property type="protein sequence ID" value="AAI13595.1"/>
    <property type="molecule type" value="mRNA"/>
</dbReference>
<dbReference type="EMBL" id="BC113596">
    <property type="protein sequence ID" value="AAI13597.1"/>
    <property type="molecule type" value="mRNA"/>
</dbReference>
<dbReference type="EMBL" id="M14566">
    <property type="protein sequence ID" value="AAA51748.1"/>
    <property type="molecule type" value="mRNA"/>
</dbReference>
<dbReference type="CCDS" id="CCDS31681.1"/>
<dbReference type="PIR" id="A94137">
    <property type="entry name" value="LPHUA4"/>
</dbReference>
<dbReference type="RefSeq" id="NP_000473.2">
    <property type="nucleotide sequence ID" value="NM_000482.4"/>
</dbReference>
<dbReference type="PDB" id="3S84">
    <property type="method" value="X-ray"/>
    <property type="resolution" value="2.40 A"/>
    <property type="chains" value="A/B=84-355"/>
</dbReference>
<dbReference type="PDBsum" id="3S84"/>
<dbReference type="SMR" id="P06727"/>
<dbReference type="DIP" id="DIP-38333N"/>
<dbReference type="FunCoup" id="P06727">
    <property type="interactions" value="209"/>
</dbReference>
<dbReference type="IntAct" id="P06727">
    <property type="interactions" value="20"/>
</dbReference>
<dbReference type="STRING" id="9606.ENSP00000350425"/>
<dbReference type="DrugBank" id="DB09130">
    <property type="generic name" value="Copper"/>
</dbReference>
<dbReference type="DrugBank" id="DB11886">
    <property type="generic name" value="Infigratinib"/>
</dbReference>
<dbReference type="DrugBank" id="DB00877">
    <property type="generic name" value="Sirolimus"/>
</dbReference>
<dbReference type="DrugBank" id="DB00460">
    <property type="generic name" value="Verteporfin"/>
</dbReference>
<dbReference type="DrugBank" id="DB01593">
    <property type="generic name" value="Zinc"/>
</dbReference>
<dbReference type="DrugBank" id="DB14487">
    <property type="generic name" value="Zinc acetate"/>
</dbReference>
<dbReference type="CarbonylDB" id="P06727"/>
<dbReference type="GlyGen" id="P06727">
    <property type="glycosylation" value="1 site, 2 O-linked glycans (1 site)"/>
</dbReference>
<dbReference type="iPTMnet" id="P06727"/>
<dbReference type="PhosphoSitePlus" id="P06727"/>
<dbReference type="BioMuta" id="APOA4"/>
<dbReference type="DMDM" id="93163358"/>
<dbReference type="REPRODUCTION-2DPAGE" id="IPI00304273"/>
<dbReference type="CPTAC" id="non-CPTAC-1077"/>
<dbReference type="CPTAC" id="non-CPTAC-1078"/>
<dbReference type="CPTAC" id="non-CPTAC-1079"/>
<dbReference type="jPOST" id="P06727"/>
<dbReference type="MassIVE" id="P06727"/>
<dbReference type="PaxDb" id="9606-ENSP00000350425"/>
<dbReference type="PeptideAtlas" id="P06727"/>
<dbReference type="ProteomicsDB" id="51912"/>
<dbReference type="Antibodypedia" id="18421">
    <property type="antibodies" value="496 antibodies from 36 providers"/>
</dbReference>
<dbReference type="DNASU" id="337"/>
<dbReference type="Ensembl" id="ENST00000357780.5">
    <property type="protein sequence ID" value="ENSP00000350425.3"/>
    <property type="gene ID" value="ENSG00000110244.7"/>
</dbReference>
<dbReference type="GeneID" id="337"/>
<dbReference type="KEGG" id="hsa:337"/>
<dbReference type="MANE-Select" id="ENST00000357780.5">
    <property type="protein sequence ID" value="ENSP00000350425.3"/>
    <property type="RefSeq nucleotide sequence ID" value="NM_000482.4"/>
    <property type="RefSeq protein sequence ID" value="NP_000473.2"/>
</dbReference>
<dbReference type="UCSC" id="uc001pps.2">
    <property type="organism name" value="human"/>
</dbReference>
<dbReference type="AGR" id="HGNC:602"/>
<dbReference type="CTD" id="337"/>
<dbReference type="DisGeNET" id="337"/>
<dbReference type="GeneCards" id="APOA4"/>
<dbReference type="HGNC" id="HGNC:602">
    <property type="gene designation" value="APOA4"/>
</dbReference>
<dbReference type="HPA" id="ENSG00000110244">
    <property type="expression patterns" value="Tissue enriched (intestine)"/>
</dbReference>
<dbReference type="MIM" id="107690">
    <property type="type" value="gene"/>
</dbReference>
<dbReference type="MIM" id="621106">
    <property type="type" value="phenotype"/>
</dbReference>
<dbReference type="neXtProt" id="NX_P06727"/>
<dbReference type="OpenTargets" id="ENSG00000110244"/>
<dbReference type="VEuPathDB" id="HostDB:ENSG00000110244"/>
<dbReference type="eggNOG" id="ENOG502QSC5">
    <property type="taxonomic scope" value="Eukaryota"/>
</dbReference>
<dbReference type="GeneTree" id="ENSGT00950000182929"/>
<dbReference type="HOGENOM" id="CLU_058447_0_0_1"/>
<dbReference type="InParanoid" id="P06727"/>
<dbReference type="OMA" id="QAKMSPY"/>
<dbReference type="OrthoDB" id="9886755at2759"/>
<dbReference type="PAN-GO" id="P06727">
    <property type="GO annotations" value="20 GO annotations based on evolutionary models"/>
</dbReference>
<dbReference type="PhylomeDB" id="P06727"/>
<dbReference type="TreeFam" id="TF334458"/>
<dbReference type="PathwayCommons" id="P06727"/>
<dbReference type="Reactome" id="R-HSA-8963888">
    <property type="pathway name" value="Chylomicron assembly"/>
</dbReference>
<dbReference type="Reactome" id="R-HSA-8963889">
    <property type="pathway name" value="Assembly of active LPL and LIPC lipase complexes"/>
</dbReference>
<dbReference type="Reactome" id="R-HSA-8963901">
    <property type="pathway name" value="Chylomicron remodeling"/>
</dbReference>
<dbReference type="Reactome" id="R-HSA-975634">
    <property type="pathway name" value="Retinoid metabolism and transport"/>
</dbReference>
<dbReference type="Reactome" id="R-HSA-977225">
    <property type="pathway name" value="Amyloid fiber formation"/>
</dbReference>
<dbReference type="SignaLink" id="P06727"/>
<dbReference type="SIGNOR" id="P06727"/>
<dbReference type="EvolutionaryTrace" id="P06727"/>
<dbReference type="Pharos" id="P06727">
    <property type="development level" value="Tbio"/>
</dbReference>
<dbReference type="PRO" id="PR:P06727"/>
<dbReference type="Proteomes" id="UP000005640">
    <property type="component" value="Chromosome 11"/>
</dbReference>
<dbReference type="RNAct" id="P06727">
    <property type="molecule type" value="protein"/>
</dbReference>
<dbReference type="Bgee" id="ENSG00000110244">
    <property type="expression patterns" value="Expressed in jejunal mucosa and 106 other cell types or tissues"/>
</dbReference>
<dbReference type="GO" id="GO:0072562">
    <property type="term" value="C:blood microparticle"/>
    <property type="evidence" value="ECO:0007005"/>
    <property type="project" value="UniProtKB"/>
</dbReference>
<dbReference type="GO" id="GO:0042627">
    <property type="term" value="C:chylomicron"/>
    <property type="evidence" value="ECO:0000314"/>
    <property type="project" value="BHF-UCL"/>
</dbReference>
<dbReference type="GO" id="GO:0062023">
    <property type="term" value="C:collagen-containing extracellular matrix"/>
    <property type="evidence" value="ECO:0007005"/>
    <property type="project" value="BHF-UCL"/>
</dbReference>
<dbReference type="GO" id="GO:0005829">
    <property type="term" value="C:cytosol"/>
    <property type="evidence" value="ECO:0000304"/>
    <property type="project" value="Reactome"/>
</dbReference>
<dbReference type="GO" id="GO:0005769">
    <property type="term" value="C:early endosome"/>
    <property type="evidence" value="ECO:0000304"/>
    <property type="project" value="Reactome"/>
</dbReference>
<dbReference type="GO" id="GO:0005788">
    <property type="term" value="C:endoplasmic reticulum lumen"/>
    <property type="evidence" value="ECO:0000304"/>
    <property type="project" value="Reactome"/>
</dbReference>
<dbReference type="GO" id="GO:0070062">
    <property type="term" value="C:extracellular exosome"/>
    <property type="evidence" value="ECO:0007005"/>
    <property type="project" value="UniProtKB"/>
</dbReference>
<dbReference type="GO" id="GO:0005576">
    <property type="term" value="C:extracellular region"/>
    <property type="evidence" value="ECO:0007005"/>
    <property type="project" value="BHF-UCL"/>
</dbReference>
<dbReference type="GO" id="GO:0005615">
    <property type="term" value="C:extracellular space"/>
    <property type="evidence" value="ECO:0000314"/>
    <property type="project" value="BHF-UCL"/>
</dbReference>
<dbReference type="GO" id="GO:1903561">
    <property type="term" value="C:extracellular vesicle"/>
    <property type="evidence" value="ECO:0000318"/>
    <property type="project" value="GO_Central"/>
</dbReference>
<dbReference type="GO" id="GO:0034364">
    <property type="term" value="C:high-density lipoprotein particle"/>
    <property type="evidence" value="ECO:0000314"/>
    <property type="project" value="BHF-UCL"/>
</dbReference>
<dbReference type="GO" id="GO:0034362">
    <property type="term" value="C:low-density lipoprotein particle"/>
    <property type="evidence" value="ECO:0000318"/>
    <property type="project" value="GO_Central"/>
</dbReference>
<dbReference type="GO" id="GO:0045202">
    <property type="term" value="C:synapse"/>
    <property type="evidence" value="ECO:0007669"/>
    <property type="project" value="Ensembl"/>
</dbReference>
<dbReference type="GO" id="GO:0034361">
    <property type="term" value="C:very-low-density lipoprotein particle"/>
    <property type="evidence" value="ECO:0000314"/>
    <property type="project" value="BHF-UCL"/>
</dbReference>
<dbReference type="GO" id="GO:0016209">
    <property type="term" value="F:antioxidant activity"/>
    <property type="evidence" value="ECO:0000314"/>
    <property type="project" value="HGNC-UCL"/>
</dbReference>
<dbReference type="GO" id="GO:0120020">
    <property type="term" value="F:cholesterol transfer activity"/>
    <property type="evidence" value="ECO:0000314"/>
    <property type="project" value="BHF-UCL"/>
</dbReference>
<dbReference type="GO" id="GO:0005507">
    <property type="term" value="F:copper ion binding"/>
    <property type="evidence" value="ECO:0000314"/>
    <property type="project" value="HGNC-UCL"/>
</dbReference>
<dbReference type="GO" id="GO:0042802">
    <property type="term" value="F:identical protein binding"/>
    <property type="evidence" value="ECO:0000353"/>
    <property type="project" value="IntAct"/>
</dbReference>
<dbReference type="GO" id="GO:0008289">
    <property type="term" value="F:lipid binding"/>
    <property type="evidence" value="ECO:0000315"/>
    <property type="project" value="BHF-UCL"/>
</dbReference>
<dbReference type="GO" id="GO:0005319">
    <property type="term" value="F:lipid transporter activity"/>
    <property type="evidence" value="ECO:0000304"/>
    <property type="project" value="ProtInc"/>
</dbReference>
<dbReference type="GO" id="GO:0031210">
    <property type="term" value="F:phosphatidylcholine binding"/>
    <property type="evidence" value="ECO:0000314"/>
    <property type="project" value="BHF-UCL"/>
</dbReference>
<dbReference type="GO" id="GO:0060228">
    <property type="term" value="F:phosphatidylcholine-sterol O-acyltransferase activator activity"/>
    <property type="evidence" value="ECO:0000314"/>
    <property type="project" value="BHF-UCL"/>
</dbReference>
<dbReference type="GO" id="GO:0005543">
    <property type="term" value="F:phospholipid binding"/>
    <property type="evidence" value="ECO:0000318"/>
    <property type="project" value="GO_Central"/>
</dbReference>
<dbReference type="GO" id="GO:0042803">
    <property type="term" value="F:protein homodimerization activity"/>
    <property type="evidence" value="ECO:0000314"/>
    <property type="project" value="BHF-UCL"/>
</dbReference>
<dbReference type="GO" id="GO:0055090">
    <property type="term" value="P:acylglycerol homeostasis"/>
    <property type="evidence" value="ECO:0000318"/>
    <property type="project" value="GO_Central"/>
</dbReference>
<dbReference type="GO" id="GO:0033344">
    <property type="term" value="P:cholesterol efflux"/>
    <property type="evidence" value="ECO:0000314"/>
    <property type="project" value="BHF-UCL"/>
</dbReference>
<dbReference type="GO" id="GO:0042632">
    <property type="term" value="P:cholesterol homeostasis"/>
    <property type="evidence" value="ECO:0000314"/>
    <property type="project" value="BHF-UCL"/>
</dbReference>
<dbReference type="GO" id="GO:0008203">
    <property type="term" value="P:cholesterol metabolic process"/>
    <property type="evidence" value="ECO:0000314"/>
    <property type="project" value="BHF-UCL"/>
</dbReference>
<dbReference type="GO" id="GO:0034378">
    <property type="term" value="P:chylomicron assembly"/>
    <property type="evidence" value="ECO:0000304"/>
    <property type="project" value="BHF-UCL"/>
</dbReference>
<dbReference type="GO" id="GO:0034371">
    <property type="term" value="P:chylomicron remodeling"/>
    <property type="evidence" value="ECO:0000305"/>
    <property type="project" value="BHF-UCL"/>
</dbReference>
<dbReference type="GO" id="GO:0034375">
    <property type="term" value="P:high-density lipoprotein particle remodeling"/>
    <property type="evidence" value="ECO:0000314"/>
    <property type="project" value="BHF-UCL"/>
</dbReference>
<dbReference type="GO" id="GO:0042744">
    <property type="term" value="P:hydrogen peroxide catabolic process"/>
    <property type="evidence" value="ECO:0000314"/>
    <property type="project" value="HGNC-UCL"/>
</dbReference>
<dbReference type="GO" id="GO:0002227">
    <property type="term" value="P:innate immune response in mucosa"/>
    <property type="evidence" value="ECO:0000314"/>
    <property type="project" value="BHF-UCL"/>
</dbReference>
<dbReference type="GO" id="GO:0007159">
    <property type="term" value="P:leukocyte cell-cell adhesion"/>
    <property type="evidence" value="ECO:0000314"/>
    <property type="project" value="BHF-UCL"/>
</dbReference>
<dbReference type="GO" id="GO:0016042">
    <property type="term" value="P:lipid catabolic process"/>
    <property type="evidence" value="ECO:0000314"/>
    <property type="project" value="BHF-UCL"/>
</dbReference>
<dbReference type="GO" id="GO:0055088">
    <property type="term" value="P:lipid homeostasis"/>
    <property type="evidence" value="ECO:0000314"/>
    <property type="project" value="BHF-UCL"/>
</dbReference>
<dbReference type="GO" id="GO:0006869">
    <property type="term" value="P:lipid transport"/>
    <property type="evidence" value="ECO:0000314"/>
    <property type="project" value="BHF-UCL"/>
</dbReference>
<dbReference type="GO" id="GO:0042157">
    <property type="term" value="P:lipoprotein metabolic process"/>
    <property type="evidence" value="ECO:0007669"/>
    <property type="project" value="InterPro"/>
</dbReference>
<dbReference type="GO" id="GO:0034445">
    <property type="term" value="P:negative regulation of plasma lipoprotein oxidation"/>
    <property type="evidence" value="ECO:0000314"/>
    <property type="project" value="BHF-UCL"/>
</dbReference>
<dbReference type="GO" id="GO:0014012">
    <property type="term" value="P:peripheral nervous system axon regeneration"/>
    <property type="evidence" value="ECO:0007669"/>
    <property type="project" value="Ensembl"/>
</dbReference>
<dbReference type="GO" id="GO:0046470">
    <property type="term" value="P:phosphatidylcholine metabolic process"/>
    <property type="evidence" value="ECO:0000314"/>
    <property type="project" value="BHF-UCL"/>
</dbReference>
<dbReference type="GO" id="GO:0033700">
    <property type="term" value="P:phospholipid efflux"/>
    <property type="evidence" value="ECO:0000314"/>
    <property type="project" value="BHF-UCL"/>
</dbReference>
<dbReference type="GO" id="GO:0045723">
    <property type="term" value="P:positive regulation of fatty acid biosynthetic process"/>
    <property type="evidence" value="ECO:0000314"/>
    <property type="project" value="BHF-UCL"/>
</dbReference>
<dbReference type="GO" id="GO:0010898">
    <property type="term" value="P:positive regulation of triglyceride catabolic process"/>
    <property type="evidence" value="ECO:0000314"/>
    <property type="project" value="BHF-UCL"/>
</dbReference>
<dbReference type="GO" id="GO:0065005">
    <property type="term" value="P:protein-lipid complex assembly"/>
    <property type="evidence" value="ECO:0000315"/>
    <property type="project" value="BHF-UCL"/>
</dbReference>
<dbReference type="GO" id="GO:0032374">
    <property type="term" value="P:regulation of cholesterol transport"/>
    <property type="evidence" value="ECO:0000314"/>
    <property type="project" value="BHF-UCL"/>
</dbReference>
<dbReference type="GO" id="GO:0030300">
    <property type="term" value="P:regulation of intestinal cholesterol absorption"/>
    <property type="evidence" value="ECO:0007669"/>
    <property type="project" value="Ensembl"/>
</dbReference>
<dbReference type="GO" id="GO:0019430">
    <property type="term" value="P:removal of superoxide radicals"/>
    <property type="evidence" value="ECO:0000314"/>
    <property type="project" value="HGNC-UCL"/>
</dbReference>
<dbReference type="GO" id="GO:0006982">
    <property type="term" value="P:response to lipid hydroperoxide"/>
    <property type="evidence" value="ECO:0000314"/>
    <property type="project" value="HGNC-UCL"/>
</dbReference>
<dbReference type="GO" id="GO:0035634">
    <property type="term" value="P:response to stilbenoid"/>
    <property type="evidence" value="ECO:0007669"/>
    <property type="project" value="Ensembl"/>
</dbReference>
<dbReference type="GO" id="GO:0034014">
    <property type="term" value="P:response to triglyceride"/>
    <property type="evidence" value="ECO:0007669"/>
    <property type="project" value="Ensembl"/>
</dbReference>
<dbReference type="GO" id="GO:0043691">
    <property type="term" value="P:reverse cholesterol transport"/>
    <property type="evidence" value="ECO:0000314"/>
    <property type="project" value="BHF-UCL"/>
</dbReference>
<dbReference type="GO" id="GO:0034372">
    <property type="term" value="P:very-low-density lipoprotein particle remodeling"/>
    <property type="evidence" value="ECO:0000314"/>
    <property type="project" value="BHF-UCL"/>
</dbReference>
<dbReference type="FunFam" id="1.20.120.20:FF:000004">
    <property type="entry name" value="Apolipoprotein A-IV"/>
    <property type="match status" value="1"/>
</dbReference>
<dbReference type="FunFam" id="1.20.120.20:FF:000005">
    <property type="entry name" value="Apolipoprotein A-IV"/>
    <property type="match status" value="1"/>
</dbReference>
<dbReference type="Gene3D" id="1.20.120.20">
    <property type="entry name" value="Apolipoprotein"/>
    <property type="match status" value="2"/>
</dbReference>
<dbReference type="InterPro" id="IPR000074">
    <property type="entry name" value="ApoA_E"/>
</dbReference>
<dbReference type="InterPro" id="IPR050163">
    <property type="entry name" value="Apolipoprotein_A1/A4/E"/>
</dbReference>
<dbReference type="PANTHER" id="PTHR18976">
    <property type="entry name" value="APOLIPOPROTEIN"/>
    <property type="match status" value="1"/>
</dbReference>
<dbReference type="PANTHER" id="PTHR18976:SF1">
    <property type="entry name" value="APOLIPOPROTEIN A-IV"/>
    <property type="match status" value="1"/>
</dbReference>
<dbReference type="Pfam" id="PF01442">
    <property type="entry name" value="Apolipoprotein"/>
    <property type="match status" value="1"/>
</dbReference>
<dbReference type="SUPFAM" id="SSF58113">
    <property type="entry name" value="Apolipoprotein A-I"/>
    <property type="match status" value="2"/>
</dbReference>
<name>APOA4_HUMAN</name>